<protein>
    <recommendedName>
        <fullName evidence="1">Diaminopimelate epimerase</fullName>
        <shortName evidence="1">DAP epimerase</shortName>
        <ecNumber evidence="1">5.1.1.7</ecNumber>
    </recommendedName>
    <alternativeName>
        <fullName evidence="1">PLP-independent amino acid racemase</fullName>
    </alternativeName>
</protein>
<accession>B2AGE5</accession>
<gene>
    <name evidence="1" type="primary">dapF</name>
    <name type="ordered locus">RALTA_A0171</name>
</gene>
<organism>
    <name type="scientific">Cupriavidus taiwanensis (strain DSM 17343 / BCRC 17206 / CCUG 44338 / CIP 107171 / LMG 19424 / R1)</name>
    <name type="common">Ralstonia taiwanensis (strain LMG 19424)</name>
    <dbReference type="NCBI Taxonomy" id="977880"/>
    <lineage>
        <taxon>Bacteria</taxon>
        <taxon>Pseudomonadati</taxon>
        <taxon>Pseudomonadota</taxon>
        <taxon>Betaproteobacteria</taxon>
        <taxon>Burkholderiales</taxon>
        <taxon>Burkholderiaceae</taxon>
        <taxon>Cupriavidus</taxon>
    </lineage>
</organism>
<sequence length="288" mass="31056">MKLKFTKMHGAGNDFVVLDGIHQQIDLTPAQWRALASRHFGVGADQILIVEKPTRPDVDFRYRIVNADGSEVEHCGNGARCFVRFVTEQGMTDKRSVRVEVMNGVITLTLQDDGQVTVDMGAPELEPARVPFRAQGLPTHAEGADALYGLEVNGRTEWISAVSMGNPHAVQVVDDVENFPVLQDGPVIEHHPAFPNRVNAGFMQVVDRHAIRLRVYERGAGETLACGTGACAAVVAGIRRGLLDSPVRVHTHGGELTIAWDGGAEPVRMTGPATTVFEGSIDLAALPA</sequence>
<reference key="1">
    <citation type="journal article" date="2008" name="Genome Res.">
        <title>Genome sequence of the beta-rhizobium Cupriavidus taiwanensis and comparative genomics of rhizobia.</title>
        <authorList>
            <person name="Amadou C."/>
            <person name="Pascal G."/>
            <person name="Mangenot S."/>
            <person name="Glew M."/>
            <person name="Bontemps C."/>
            <person name="Capela D."/>
            <person name="Carrere S."/>
            <person name="Cruveiller S."/>
            <person name="Dossat C."/>
            <person name="Lajus A."/>
            <person name="Marchetti M."/>
            <person name="Poinsot V."/>
            <person name="Rouy Z."/>
            <person name="Servin B."/>
            <person name="Saad M."/>
            <person name="Schenowitz C."/>
            <person name="Barbe V."/>
            <person name="Batut J."/>
            <person name="Medigue C."/>
            <person name="Masson-Boivin C."/>
        </authorList>
    </citation>
    <scope>NUCLEOTIDE SEQUENCE [LARGE SCALE GENOMIC DNA]</scope>
    <source>
        <strain>DSM 17343 / BCRC 17206 / CCUG 44338 / CIP 107171 / LMG 19424 / R1</strain>
    </source>
</reference>
<keyword id="KW-0028">Amino-acid biosynthesis</keyword>
<keyword id="KW-0963">Cytoplasm</keyword>
<keyword id="KW-0413">Isomerase</keyword>
<keyword id="KW-0457">Lysine biosynthesis</keyword>
<name>DAPF_CUPTR</name>
<proteinExistence type="inferred from homology"/>
<evidence type="ECO:0000255" key="1">
    <source>
        <dbReference type="HAMAP-Rule" id="MF_00197"/>
    </source>
</evidence>
<dbReference type="EC" id="5.1.1.7" evidence="1"/>
<dbReference type="EMBL" id="CU633749">
    <property type="protein sequence ID" value="CAP62844.1"/>
    <property type="molecule type" value="Genomic_DNA"/>
</dbReference>
<dbReference type="RefSeq" id="WP_012351512.1">
    <property type="nucleotide sequence ID" value="NC_010528.1"/>
</dbReference>
<dbReference type="SMR" id="B2AGE5"/>
<dbReference type="GeneID" id="29763308"/>
<dbReference type="KEGG" id="cti:RALTA_A0171"/>
<dbReference type="eggNOG" id="COG0253">
    <property type="taxonomic scope" value="Bacteria"/>
</dbReference>
<dbReference type="HOGENOM" id="CLU_053306_1_1_4"/>
<dbReference type="BioCyc" id="CTAI977880:RALTA_RS00845-MONOMER"/>
<dbReference type="UniPathway" id="UPA00034">
    <property type="reaction ID" value="UER00025"/>
</dbReference>
<dbReference type="Proteomes" id="UP000001692">
    <property type="component" value="Chromosome 1"/>
</dbReference>
<dbReference type="GO" id="GO:0005829">
    <property type="term" value="C:cytosol"/>
    <property type="evidence" value="ECO:0007669"/>
    <property type="project" value="TreeGrafter"/>
</dbReference>
<dbReference type="GO" id="GO:0008837">
    <property type="term" value="F:diaminopimelate epimerase activity"/>
    <property type="evidence" value="ECO:0007669"/>
    <property type="project" value="UniProtKB-UniRule"/>
</dbReference>
<dbReference type="GO" id="GO:0009089">
    <property type="term" value="P:lysine biosynthetic process via diaminopimelate"/>
    <property type="evidence" value="ECO:0007669"/>
    <property type="project" value="UniProtKB-UniRule"/>
</dbReference>
<dbReference type="FunFam" id="3.10.310.10:FF:000001">
    <property type="entry name" value="Diaminopimelate epimerase"/>
    <property type="match status" value="1"/>
</dbReference>
<dbReference type="Gene3D" id="3.10.310.10">
    <property type="entry name" value="Diaminopimelate Epimerase, Chain A, domain 1"/>
    <property type="match status" value="2"/>
</dbReference>
<dbReference type="HAMAP" id="MF_00197">
    <property type="entry name" value="DAP_epimerase"/>
    <property type="match status" value="1"/>
</dbReference>
<dbReference type="InterPro" id="IPR018510">
    <property type="entry name" value="DAP_epimerase_AS"/>
</dbReference>
<dbReference type="InterPro" id="IPR001653">
    <property type="entry name" value="DAP_epimerase_DapF"/>
</dbReference>
<dbReference type="NCBIfam" id="TIGR00652">
    <property type="entry name" value="DapF"/>
    <property type="match status" value="1"/>
</dbReference>
<dbReference type="PANTHER" id="PTHR31689:SF0">
    <property type="entry name" value="DIAMINOPIMELATE EPIMERASE"/>
    <property type="match status" value="1"/>
</dbReference>
<dbReference type="PANTHER" id="PTHR31689">
    <property type="entry name" value="DIAMINOPIMELATE EPIMERASE, CHLOROPLASTIC"/>
    <property type="match status" value="1"/>
</dbReference>
<dbReference type="Pfam" id="PF01678">
    <property type="entry name" value="DAP_epimerase"/>
    <property type="match status" value="2"/>
</dbReference>
<dbReference type="SUPFAM" id="SSF54506">
    <property type="entry name" value="Diaminopimelate epimerase-like"/>
    <property type="match status" value="1"/>
</dbReference>
<dbReference type="PROSITE" id="PS01326">
    <property type="entry name" value="DAP_EPIMERASE"/>
    <property type="match status" value="1"/>
</dbReference>
<comment type="function">
    <text evidence="1">Catalyzes the stereoinversion of LL-2,6-diaminopimelate (L,L-DAP) to meso-diaminopimelate (meso-DAP), a precursor of L-lysine and an essential component of the bacterial peptidoglycan.</text>
</comment>
<comment type="catalytic activity">
    <reaction evidence="1">
        <text>(2S,6S)-2,6-diaminopimelate = meso-2,6-diaminopimelate</text>
        <dbReference type="Rhea" id="RHEA:15393"/>
        <dbReference type="ChEBI" id="CHEBI:57609"/>
        <dbReference type="ChEBI" id="CHEBI:57791"/>
        <dbReference type="EC" id="5.1.1.7"/>
    </reaction>
</comment>
<comment type="pathway">
    <text evidence="1">Amino-acid biosynthesis; L-lysine biosynthesis via DAP pathway; DL-2,6-diaminopimelate from LL-2,6-diaminopimelate: step 1/1.</text>
</comment>
<comment type="subunit">
    <text evidence="1">Homodimer.</text>
</comment>
<comment type="subcellular location">
    <subcellularLocation>
        <location evidence="1">Cytoplasm</location>
    </subcellularLocation>
</comment>
<comment type="similarity">
    <text evidence="1">Belongs to the diaminopimelate epimerase family.</text>
</comment>
<feature type="chain" id="PRO_1000099230" description="Diaminopimelate epimerase">
    <location>
        <begin position="1"/>
        <end position="288"/>
    </location>
</feature>
<feature type="active site" description="Proton donor" evidence="1">
    <location>
        <position position="75"/>
    </location>
</feature>
<feature type="active site" description="Proton acceptor" evidence="1">
    <location>
        <position position="226"/>
    </location>
</feature>
<feature type="binding site" evidence="1">
    <location>
        <position position="13"/>
    </location>
    <ligand>
        <name>substrate</name>
    </ligand>
</feature>
<feature type="binding site" evidence="1">
    <location>
        <position position="46"/>
    </location>
    <ligand>
        <name>substrate</name>
    </ligand>
</feature>
<feature type="binding site" evidence="1">
    <location>
        <position position="66"/>
    </location>
    <ligand>
        <name>substrate</name>
    </ligand>
</feature>
<feature type="binding site" evidence="1">
    <location>
        <begin position="76"/>
        <end position="77"/>
    </location>
    <ligand>
        <name>substrate</name>
    </ligand>
</feature>
<feature type="binding site" evidence="1">
    <location>
        <position position="166"/>
    </location>
    <ligand>
        <name>substrate</name>
    </ligand>
</feature>
<feature type="binding site" evidence="1">
    <location>
        <position position="199"/>
    </location>
    <ligand>
        <name>substrate</name>
    </ligand>
</feature>
<feature type="binding site" evidence="1">
    <location>
        <begin position="217"/>
        <end position="218"/>
    </location>
    <ligand>
        <name>substrate</name>
    </ligand>
</feature>
<feature type="binding site" evidence="1">
    <location>
        <begin position="227"/>
        <end position="228"/>
    </location>
    <ligand>
        <name>substrate</name>
    </ligand>
</feature>
<feature type="site" description="Could be important to modulate the pK values of the two catalytic cysteine residues" evidence="1">
    <location>
        <position position="168"/>
    </location>
</feature>
<feature type="site" description="Could be important to modulate the pK values of the two catalytic cysteine residues" evidence="1">
    <location>
        <position position="217"/>
    </location>
</feature>